<proteinExistence type="inferred from homology"/>
<keyword id="KW-1185">Reference proteome</keyword>
<keyword id="KW-0687">Ribonucleoprotein</keyword>
<keyword id="KW-0689">Ribosomal protein</keyword>
<keyword id="KW-0694">RNA-binding</keyword>
<keyword id="KW-0699">rRNA-binding</keyword>
<dbReference type="EMBL" id="AE016825">
    <property type="protein sequence ID" value="AAQ61837.1"/>
    <property type="molecule type" value="Genomic_DNA"/>
</dbReference>
<dbReference type="RefSeq" id="WP_011137724.1">
    <property type="nucleotide sequence ID" value="NC_005085.1"/>
</dbReference>
<dbReference type="SMR" id="Q7NQG1"/>
<dbReference type="STRING" id="243365.CV_4177"/>
<dbReference type="GeneID" id="89687782"/>
<dbReference type="KEGG" id="cvi:CV_4177"/>
<dbReference type="eggNOG" id="COG0186">
    <property type="taxonomic scope" value="Bacteria"/>
</dbReference>
<dbReference type="HOGENOM" id="CLU_073626_1_1_4"/>
<dbReference type="OrthoDB" id="9811714at2"/>
<dbReference type="Proteomes" id="UP000001424">
    <property type="component" value="Chromosome"/>
</dbReference>
<dbReference type="GO" id="GO:0022627">
    <property type="term" value="C:cytosolic small ribosomal subunit"/>
    <property type="evidence" value="ECO:0007669"/>
    <property type="project" value="TreeGrafter"/>
</dbReference>
<dbReference type="GO" id="GO:0019843">
    <property type="term" value="F:rRNA binding"/>
    <property type="evidence" value="ECO:0007669"/>
    <property type="project" value="UniProtKB-UniRule"/>
</dbReference>
<dbReference type="GO" id="GO:0003735">
    <property type="term" value="F:structural constituent of ribosome"/>
    <property type="evidence" value="ECO:0007669"/>
    <property type="project" value="InterPro"/>
</dbReference>
<dbReference type="GO" id="GO:0006412">
    <property type="term" value="P:translation"/>
    <property type="evidence" value="ECO:0007669"/>
    <property type="project" value="UniProtKB-UniRule"/>
</dbReference>
<dbReference type="CDD" id="cd00364">
    <property type="entry name" value="Ribosomal_uS17"/>
    <property type="match status" value="1"/>
</dbReference>
<dbReference type="Gene3D" id="2.40.50.140">
    <property type="entry name" value="Nucleic acid-binding proteins"/>
    <property type="match status" value="1"/>
</dbReference>
<dbReference type="HAMAP" id="MF_01345_B">
    <property type="entry name" value="Ribosomal_uS17_B"/>
    <property type="match status" value="1"/>
</dbReference>
<dbReference type="InterPro" id="IPR012340">
    <property type="entry name" value="NA-bd_OB-fold"/>
</dbReference>
<dbReference type="InterPro" id="IPR000266">
    <property type="entry name" value="Ribosomal_uS17"/>
</dbReference>
<dbReference type="InterPro" id="IPR019984">
    <property type="entry name" value="Ribosomal_uS17_bact/chlr"/>
</dbReference>
<dbReference type="InterPro" id="IPR019979">
    <property type="entry name" value="Ribosomal_uS17_CS"/>
</dbReference>
<dbReference type="NCBIfam" id="NF004123">
    <property type="entry name" value="PRK05610.1"/>
    <property type="match status" value="1"/>
</dbReference>
<dbReference type="NCBIfam" id="TIGR03635">
    <property type="entry name" value="uS17_bact"/>
    <property type="match status" value="1"/>
</dbReference>
<dbReference type="PANTHER" id="PTHR10744">
    <property type="entry name" value="40S RIBOSOMAL PROTEIN S11 FAMILY MEMBER"/>
    <property type="match status" value="1"/>
</dbReference>
<dbReference type="PANTHER" id="PTHR10744:SF1">
    <property type="entry name" value="SMALL RIBOSOMAL SUBUNIT PROTEIN US17M"/>
    <property type="match status" value="1"/>
</dbReference>
<dbReference type="Pfam" id="PF00366">
    <property type="entry name" value="Ribosomal_S17"/>
    <property type="match status" value="1"/>
</dbReference>
<dbReference type="PRINTS" id="PR00973">
    <property type="entry name" value="RIBOSOMALS17"/>
</dbReference>
<dbReference type="SUPFAM" id="SSF50249">
    <property type="entry name" value="Nucleic acid-binding proteins"/>
    <property type="match status" value="1"/>
</dbReference>
<dbReference type="PROSITE" id="PS00056">
    <property type="entry name" value="RIBOSOMAL_S17"/>
    <property type="match status" value="1"/>
</dbReference>
<feature type="chain" id="PRO_0000233459" description="Small ribosomal subunit protein uS17">
    <location>
        <begin position="1"/>
        <end position="87"/>
    </location>
</feature>
<gene>
    <name evidence="1" type="primary">rpsQ</name>
    <name type="ordered locus">CV_4177</name>
</gene>
<sequence length="87" mass="9877">MSETKVVRTLTGVVVSDKMDKTVTVLVERKVKHPIYGKIIRRSKKFHAHDENNEFKAGDLVVISESRPLSKTKSWVVTGLVEKSRQV</sequence>
<reference key="1">
    <citation type="journal article" date="2003" name="Proc. Natl. Acad. Sci. U.S.A.">
        <title>The complete genome sequence of Chromobacterium violaceum reveals remarkable and exploitable bacterial adaptability.</title>
        <authorList>
            <person name="Vasconcelos A.T.R."/>
            <person name="de Almeida D.F."/>
            <person name="Hungria M."/>
            <person name="Guimaraes C.T."/>
            <person name="Antonio R.V."/>
            <person name="Almeida F.C."/>
            <person name="de Almeida L.G.P."/>
            <person name="de Almeida R."/>
            <person name="Alves-Gomes J.A."/>
            <person name="Andrade E.M."/>
            <person name="Araripe J."/>
            <person name="de Araujo M.F.F."/>
            <person name="Astolfi-Filho S."/>
            <person name="Azevedo V."/>
            <person name="Baptista A.J."/>
            <person name="Bataus L.A.M."/>
            <person name="Batista J.S."/>
            <person name="Belo A."/>
            <person name="van den Berg C."/>
            <person name="Bogo M."/>
            <person name="Bonatto S."/>
            <person name="Bordignon J."/>
            <person name="Brigido M.M."/>
            <person name="Brito C.A."/>
            <person name="Brocchi M."/>
            <person name="Burity H.A."/>
            <person name="Camargo A.A."/>
            <person name="Cardoso D.D.P."/>
            <person name="Carneiro N.P."/>
            <person name="Carraro D.M."/>
            <person name="Carvalho C.M.B."/>
            <person name="Cascardo J.C.M."/>
            <person name="Cavada B.S."/>
            <person name="Chueire L.M.O."/>
            <person name="Creczynski-Pasa T.B."/>
            <person name="Cunha-Junior N.C."/>
            <person name="Fagundes N."/>
            <person name="Falcao C.L."/>
            <person name="Fantinatti F."/>
            <person name="Farias I.P."/>
            <person name="Felipe M.S.S."/>
            <person name="Ferrari L.P."/>
            <person name="Ferro J.A."/>
            <person name="Ferro M.I.T."/>
            <person name="Franco G.R."/>
            <person name="Freitas N.S.A."/>
            <person name="Furlan L.R."/>
            <person name="Gazzinelli R.T."/>
            <person name="Gomes E.A."/>
            <person name="Goncalves P.R."/>
            <person name="Grangeiro T.B."/>
            <person name="Grattapaglia D."/>
            <person name="Grisard E.C."/>
            <person name="Hanna E.S."/>
            <person name="Jardim S.N."/>
            <person name="Laurino J."/>
            <person name="Leoi L.C.T."/>
            <person name="Lima L.F.A."/>
            <person name="Loureiro M.F."/>
            <person name="Lyra M.C.C.P."/>
            <person name="Madeira H.M.F."/>
            <person name="Manfio G.P."/>
            <person name="Maranhao A.Q."/>
            <person name="Martins W.S."/>
            <person name="di Mauro S.M.Z."/>
            <person name="de Medeiros S.R.B."/>
            <person name="Meissner R.V."/>
            <person name="Moreira M.A.M."/>
            <person name="Nascimento F.F."/>
            <person name="Nicolas M.F."/>
            <person name="Oliveira J.G."/>
            <person name="Oliveira S.C."/>
            <person name="Paixao R.F.C."/>
            <person name="Parente J.A."/>
            <person name="Pedrosa F.O."/>
            <person name="Pena S.D.J."/>
            <person name="Pereira J.O."/>
            <person name="Pereira M."/>
            <person name="Pinto L.S.R.C."/>
            <person name="Pinto L.S."/>
            <person name="Porto J.I.R."/>
            <person name="Potrich D.P."/>
            <person name="Ramalho-Neto C.E."/>
            <person name="Reis A.M.M."/>
            <person name="Rigo L.U."/>
            <person name="Rondinelli E."/>
            <person name="Santos E.B.P."/>
            <person name="Santos F.R."/>
            <person name="Schneider M.P.C."/>
            <person name="Seuanez H.N."/>
            <person name="Silva A.M.R."/>
            <person name="da Silva A.L.C."/>
            <person name="Silva D.W."/>
            <person name="Silva R."/>
            <person name="Simoes I.C."/>
            <person name="Simon D."/>
            <person name="Soares C.M.A."/>
            <person name="Soares R.B.A."/>
            <person name="Souza E.M."/>
            <person name="Souza K.R.L."/>
            <person name="Souza R.C."/>
            <person name="Steffens M.B.R."/>
            <person name="Steindel M."/>
            <person name="Teixeira S.R."/>
            <person name="Urmenyi T."/>
            <person name="Vettore A."/>
            <person name="Wassem R."/>
            <person name="Zaha A."/>
            <person name="Simpson A.J.G."/>
        </authorList>
    </citation>
    <scope>NUCLEOTIDE SEQUENCE [LARGE SCALE GENOMIC DNA]</scope>
    <source>
        <strain>ATCC 12472 / DSM 30191 / JCM 1249 / CCUG 213 / NBRC 12614 / NCIMB 9131 / NCTC 9757 / MK</strain>
    </source>
</reference>
<evidence type="ECO:0000255" key="1">
    <source>
        <dbReference type="HAMAP-Rule" id="MF_01345"/>
    </source>
</evidence>
<evidence type="ECO:0000305" key="2"/>
<comment type="function">
    <text evidence="1">One of the primary rRNA binding proteins, it binds specifically to the 5'-end of 16S ribosomal RNA.</text>
</comment>
<comment type="subunit">
    <text evidence="1">Part of the 30S ribosomal subunit.</text>
</comment>
<comment type="similarity">
    <text evidence="1">Belongs to the universal ribosomal protein uS17 family.</text>
</comment>
<accession>Q7NQG1</accession>
<protein>
    <recommendedName>
        <fullName evidence="1">Small ribosomal subunit protein uS17</fullName>
    </recommendedName>
    <alternativeName>
        <fullName evidence="2">30S ribosomal protein S17</fullName>
    </alternativeName>
</protein>
<name>RS17_CHRVO</name>
<organism>
    <name type="scientific">Chromobacterium violaceum (strain ATCC 12472 / DSM 30191 / JCM 1249 / CCUG 213 / NBRC 12614 / NCIMB 9131 / NCTC 9757 / MK)</name>
    <dbReference type="NCBI Taxonomy" id="243365"/>
    <lineage>
        <taxon>Bacteria</taxon>
        <taxon>Pseudomonadati</taxon>
        <taxon>Pseudomonadota</taxon>
        <taxon>Betaproteobacteria</taxon>
        <taxon>Neisseriales</taxon>
        <taxon>Chromobacteriaceae</taxon>
        <taxon>Chromobacterium</taxon>
    </lineage>
</organism>